<dbReference type="EMBL" id="FM178379">
    <property type="protein sequence ID" value="CAQ80207.1"/>
    <property type="molecule type" value="Genomic_DNA"/>
</dbReference>
<dbReference type="RefSeq" id="WP_012550995.1">
    <property type="nucleotide sequence ID" value="NC_011312.1"/>
</dbReference>
<dbReference type="SMR" id="B6EKM7"/>
<dbReference type="KEGG" id="vsa:VSAL_I2523"/>
<dbReference type="eggNOG" id="COG1381">
    <property type="taxonomic scope" value="Bacteria"/>
</dbReference>
<dbReference type="HOGENOM" id="CLU_066645_1_0_6"/>
<dbReference type="Proteomes" id="UP000001730">
    <property type="component" value="Chromosome 1"/>
</dbReference>
<dbReference type="GO" id="GO:0043590">
    <property type="term" value="C:bacterial nucleoid"/>
    <property type="evidence" value="ECO:0007669"/>
    <property type="project" value="TreeGrafter"/>
</dbReference>
<dbReference type="GO" id="GO:0006310">
    <property type="term" value="P:DNA recombination"/>
    <property type="evidence" value="ECO:0007669"/>
    <property type="project" value="UniProtKB-UniRule"/>
</dbReference>
<dbReference type="GO" id="GO:0006302">
    <property type="term" value="P:double-strand break repair"/>
    <property type="evidence" value="ECO:0007669"/>
    <property type="project" value="TreeGrafter"/>
</dbReference>
<dbReference type="Gene3D" id="2.40.50.140">
    <property type="entry name" value="Nucleic acid-binding proteins"/>
    <property type="match status" value="1"/>
</dbReference>
<dbReference type="Gene3D" id="1.20.1440.120">
    <property type="entry name" value="Recombination protein O, C-terminal domain"/>
    <property type="match status" value="1"/>
</dbReference>
<dbReference type="HAMAP" id="MF_00201">
    <property type="entry name" value="RecO"/>
    <property type="match status" value="1"/>
</dbReference>
<dbReference type="InterPro" id="IPR037278">
    <property type="entry name" value="ARFGAP/RecO"/>
</dbReference>
<dbReference type="InterPro" id="IPR022572">
    <property type="entry name" value="DNA_rep/recomb_RecO_N"/>
</dbReference>
<dbReference type="InterPro" id="IPR012340">
    <property type="entry name" value="NA-bd_OB-fold"/>
</dbReference>
<dbReference type="InterPro" id="IPR003717">
    <property type="entry name" value="RecO"/>
</dbReference>
<dbReference type="InterPro" id="IPR042242">
    <property type="entry name" value="RecO_C"/>
</dbReference>
<dbReference type="NCBIfam" id="TIGR00613">
    <property type="entry name" value="reco"/>
    <property type="match status" value="1"/>
</dbReference>
<dbReference type="PANTHER" id="PTHR33991">
    <property type="entry name" value="DNA REPAIR PROTEIN RECO"/>
    <property type="match status" value="1"/>
</dbReference>
<dbReference type="PANTHER" id="PTHR33991:SF1">
    <property type="entry name" value="DNA REPAIR PROTEIN RECO"/>
    <property type="match status" value="1"/>
</dbReference>
<dbReference type="Pfam" id="PF02565">
    <property type="entry name" value="RecO_C"/>
    <property type="match status" value="1"/>
</dbReference>
<dbReference type="Pfam" id="PF11967">
    <property type="entry name" value="RecO_N"/>
    <property type="match status" value="1"/>
</dbReference>
<dbReference type="SUPFAM" id="SSF57863">
    <property type="entry name" value="ArfGap/RecO-like zinc finger"/>
    <property type="match status" value="1"/>
</dbReference>
<dbReference type="SUPFAM" id="SSF50249">
    <property type="entry name" value="Nucleic acid-binding proteins"/>
    <property type="match status" value="1"/>
</dbReference>
<feature type="chain" id="PRO_1000099361" description="DNA repair protein RecO">
    <location>
        <begin position="1"/>
        <end position="238"/>
    </location>
</feature>
<protein>
    <recommendedName>
        <fullName evidence="1">DNA repair protein RecO</fullName>
    </recommendedName>
    <alternativeName>
        <fullName evidence="1">Recombination protein O</fullName>
    </alternativeName>
</protein>
<reference key="1">
    <citation type="journal article" date="2008" name="BMC Genomics">
        <title>The genome sequence of the fish pathogen Aliivibrio salmonicida strain LFI1238 shows extensive evidence of gene decay.</title>
        <authorList>
            <person name="Hjerde E."/>
            <person name="Lorentzen M.S."/>
            <person name="Holden M.T."/>
            <person name="Seeger K."/>
            <person name="Paulsen S."/>
            <person name="Bason N."/>
            <person name="Churcher C."/>
            <person name="Harris D."/>
            <person name="Norbertczak H."/>
            <person name="Quail M.A."/>
            <person name="Sanders S."/>
            <person name="Thurston S."/>
            <person name="Parkhill J."/>
            <person name="Willassen N.P."/>
            <person name="Thomson N.R."/>
        </authorList>
    </citation>
    <scope>NUCLEOTIDE SEQUENCE [LARGE SCALE GENOMIC DNA]</scope>
    <source>
        <strain>LFI1238</strain>
    </source>
</reference>
<sequence length="238" mass="27083">MEEGLQRCFVLHRRPYSESSLILDVFSEEYGRLSIISKGARSKRSNLKGVLQAFTPLLMKWSGKGSMRTLRQAETISLAIPLTGINLYSALYINELVVRVIEQETPYPALFLDYLTALTELAQTKNPEPALRRFELALLSSLGYGVDFLHCAGSGEMVSPEMTYRYREQKGFMASIRHDPLMSFKGDELIAISERRFITPEQLKAAKRFTRIALKPYLGGKPLKSRELFLPRTRSILK</sequence>
<name>RECO_ALISL</name>
<comment type="function">
    <text evidence="1">Involved in DNA repair and RecF pathway recombination.</text>
</comment>
<comment type="similarity">
    <text evidence="1">Belongs to the RecO family.</text>
</comment>
<proteinExistence type="inferred from homology"/>
<gene>
    <name evidence="1" type="primary">recO</name>
    <name type="ordered locus">VSAL_I2523</name>
</gene>
<keyword id="KW-0227">DNA damage</keyword>
<keyword id="KW-0233">DNA recombination</keyword>
<keyword id="KW-0234">DNA repair</keyword>
<organism>
    <name type="scientific">Aliivibrio salmonicida (strain LFI1238)</name>
    <name type="common">Vibrio salmonicida (strain LFI1238)</name>
    <dbReference type="NCBI Taxonomy" id="316275"/>
    <lineage>
        <taxon>Bacteria</taxon>
        <taxon>Pseudomonadati</taxon>
        <taxon>Pseudomonadota</taxon>
        <taxon>Gammaproteobacteria</taxon>
        <taxon>Vibrionales</taxon>
        <taxon>Vibrionaceae</taxon>
        <taxon>Aliivibrio</taxon>
    </lineage>
</organism>
<accession>B6EKM7</accession>
<evidence type="ECO:0000255" key="1">
    <source>
        <dbReference type="HAMAP-Rule" id="MF_00201"/>
    </source>
</evidence>